<reference key="1">
    <citation type="journal article" date="1994" name="DNA Res.">
        <title>Systematic sequencing of the 180 kilobase region of the Bacillus subtilis chromosome containing the replication origin.</title>
        <authorList>
            <person name="Ogasawara N."/>
            <person name="Nakai S."/>
            <person name="Yoshikawa H."/>
        </authorList>
    </citation>
    <scope>NUCLEOTIDE SEQUENCE [GENOMIC DNA]</scope>
    <source>
        <strain>168</strain>
    </source>
</reference>
<reference key="2">
    <citation type="journal article" date="1997" name="Nature">
        <title>The complete genome sequence of the Gram-positive bacterium Bacillus subtilis.</title>
        <authorList>
            <person name="Kunst F."/>
            <person name="Ogasawara N."/>
            <person name="Moszer I."/>
            <person name="Albertini A.M."/>
            <person name="Alloni G."/>
            <person name="Azevedo V."/>
            <person name="Bertero M.G."/>
            <person name="Bessieres P."/>
            <person name="Bolotin A."/>
            <person name="Borchert S."/>
            <person name="Borriss R."/>
            <person name="Boursier L."/>
            <person name="Brans A."/>
            <person name="Braun M."/>
            <person name="Brignell S.C."/>
            <person name="Bron S."/>
            <person name="Brouillet S."/>
            <person name="Bruschi C.V."/>
            <person name="Caldwell B."/>
            <person name="Capuano V."/>
            <person name="Carter N.M."/>
            <person name="Choi S.-K."/>
            <person name="Codani J.-J."/>
            <person name="Connerton I.F."/>
            <person name="Cummings N.J."/>
            <person name="Daniel R.A."/>
            <person name="Denizot F."/>
            <person name="Devine K.M."/>
            <person name="Duesterhoeft A."/>
            <person name="Ehrlich S.D."/>
            <person name="Emmerson P.T."/>
            <person name="Entian K.-D."/>
            <person name="Errington J."/>
            <person name="Fabret C."/>
            <person name="Ferrari E."/>
            <person name="Foulger D."/>
            <person name="Fritz C."/>
            <person name="Fujita M."/>
            <person name="Fujita Y."/>
            <person name="Fuma S."/>
            <person name="Galizzi A."/>
            <person name="Galleron N."/>
            <person name="Ghim S.-Y."/>
            <person name="Glaser P."/>
            <person name="Goffeau A."/>
            <person name="Golightly E.J."/>
            <person name="Grandi G."/>
            <person name="Guiseppi G."/>
            <person name="Guy B.J."/>
            <person name="Haga K."/>
            <person name="Haiech J."/>
            <person name="Harwood C.R."/>
            <person name="Henaut A."/>
            <person name="Hilbert H."/>
            <person name="Holsappel S."/>
            <person name="Hosono S."/>
            <person name="Hullo M.-F."/>
            <person name="Itaya M."/>
            <person name="Jones L.-M."/>
            <person name="Joris B."/>
            <person name="Karamata D."/>
            <person name="Kasahara Y."/>
            <person name="Klaerr-Blanchard M."/>
            <person name="Klein C."/>
            <person name="Kobayashi Y."/>
            <person name="Koetter P."/>
            <person name="Koningstein G."/>
            <person name="Krogh S."/>
            <person name="Kumano M."/>
            <person name="Kurita K."/>
            <person name="Lapidus A."/>
            <person name="Lardinois S."/>
            <person name="Lauber J."/>
            <person name="Lazarevic V."/>
            <person name="Lee S.-M."/>
            <person name="Levine A."/>
            <person name="Liu H."/>
            <person name="Masuda S."/>
            <person name="Mauel C."/>
            <person name="Medigue C."/>
            <person name="Medina N."/>
            <person name="Mellado R.P."/>
            <person name="Mizuno M."/>
            <person name="Moestl D."/>
            <person name="Nakai S."/>
            <person name="Noback M."/>
            <person name="Noone D."/>
            <person name="O'Reilly M."/>
            <person name="Ogawa K."/>
            <person name="Ogiwara A."/>
            <person name="Oudega B."/>
            <person name="Park S.-H."/>
            <person name="Parro V."/>
            <person name="Pohl T.M."/>
            <person name="Portetelle D."/>
            <person name="Porwollik S."/>
            <person name="Prescott A.M."/>
            <person name="Presecan E."/>
            <person name="Pujic P."/>
            <person name="Purnelle B."/>
            <person name="Rapoport G."/>
            <person name="Rey M."/>
            <person name="Reynolds S."/>
            <person name="Rieger M."/>
            <person name="Rivolta C."/>
            <person name="Rocha E."/>
            <person name="Roche B."/>
            <person name="Rose M."/>
            <person name="Sadaie Y."/>
            <person name="Sato T."/>
            <person name="Scanlan E."/>
            <person name="Schleich S."/>
            <person name="Schroeter R."/>
            <person name="Scoffone F."/>
            <person name="Sekiguchi J."/>
            <person name="Sekowska A."/>
            <person name="Seror S.J."/>
            <person name="Serror P."/>
            <person name="Shin B.-S."/>
            <person name="Soldo B."/>
            <person name="Sorokin A."/>
            <person name="Tacconi E."/>
            <person name="Takagi T."/>
            <person name="Takahashi H."/>
            <person name="Takemaru K."/>
            <person name="Takeuchi M."/>
            <person name="Tamakoshi A."/>
            <person name="Tanaka T."/>
            <person name="Terpstra P."/>
            <person name="Tognoni A."/>
            <person name="Tosato V."/>
            <person name="Uchiyama S."/>
            <person name="Vandenbol M."/>
            <person name="Vannier F."/>
            <person name="Vassarotti A."/>
            <person name="Viari A."/>
            <person name="Wambutt R."/>
            <person name="Wedler E."/>
            <person name="Wedler H."/>
            <person name="Weitzenegger T."/>
            <person name="Winters P."/>
            <person name="Wipat A."/>
            <person name="Yamamoto H."/>
            <person name="Yamane K."/>
            <person name="Yasumoto K."/>
            <person name="Yata K."/>
            <person name="Yoshida K."/>
            <person name="Yoshikawa H.-F."/>
            <person name="Zumstein E."/>
            <person name="Yoshikawa H."/>
            <person name="Danchin A."/>
        </authorList>
    </citation>
    <scope>NUCLEOTIDE SEQUENCE [LARGE SCALE GENOMIC DNA]</scope>
    <source>
        <strain>168</strain>
    </source>
</reference>
<keyword id="KW-1185">Reference proteome</keyword>
<protein>
    <recommendedName>
        <fullName>Uncharacterized protein YyaS</fullName>
    </recommendedName>
</protein>
<name>YYAS_BACSU</name>
<accession>P37505</accession>
<sequence>MKYMYYGIGILILSLGISLTIQSGLGTSPFDALLVGLSKKIGLTVGSWEVLISVILLICNAILTRKKPILLGLITAFITGIGIDLWLFVVKNTIYLNSLLSKLICFGIGLVLIGLGTAIYLQTKFASTPIDHLTLIIRDLSKRTILFSRTLVYALFLVLAIIFKGPIGIGTLLTVCLGGMLLHVFMPIVERHFLSKNRRGY</sequence>
<organism>
    <name type="scientific">Bacillus subtilis (strain 168)</name>
    <dbReference type="NCBI Taxonomy" id="224308"/>
    <lineage>
        <taxon>Bacteria</taxon>
        <taxon>Bacillati</taxon>
        <taxon>Bacillota</taxon>
        <taxon>Bacilli</taxon>
        <taxon>Bacillales</taxon>
        <taxon>Bacillaceae</taxon>
        <taxon>Bacillus</taxon>
    </lineage>
</organism>
<dbReference type="EMBL" id="D26185">
    <property type="protein sequence ID" value="BAA05204.1"/>
    <property type="molecule type" value="Genomic_DNA"/>
</dbReference>
<dbReference type="EMBL" id="AL009126">
    <property type="protein sequence ID" value="CAB16110.1"/>
    <property type="molecule type" value="Genomic_DNA"/>
</dbReference>
<dbReference type="PIR" id="S65998">
    <property type="entry name" value="S65998"/>
</dbReference>
<dbReference type="RefSeq" id="NP_391953.1">
    <property type="nucleotide sequence ID" value="NC_000964.3"/>
</dbReference>
<dbReference type="RefSeq" id="WP_003244154.1">
    <property type="nucleotide sequence ID" value="NZ_OZ025638.1"/>
</dbReference>
<dbReference type="FunCoup" id="P37505">
    <property type="interactions" value="54"/>
</dbReference>
<dbReference type="STRING" id="224308.BSU40730"/>
<dbReference type="PaxDb" id="224308-BSU40730"/>
<dbReference type="DNASU" id="937921"/>
<dbReference type="EnsemblBacteria" id="CAB16110">
    <property type="protein sequence ID" value="CAB16110"/>
    <property type="gene ID" value="BSU_40730"/>
</dbReference>
<dbReference type="GeneID" id="937921"/>
<dbReference type="KEGG" id="bsu:BSU40730"/>
<dbReference type="PATRIC" id="fig|224308.179.peg.4415"/>
<dbReference type="eggNOG" id="COG2364">
    <property type="taxonomic scope" value="Bacteria"/>
</dbReference>
<dbReference type="InParanoid" id="P37505"/>
<dbReference type="OrthoDB" id="1902994at2"/>
<dbReference type="PhylomeDB" id="P37505"/>
<dbReference type="BioCyc" id="BSUB:BSU40730-MONOMER"/>
<dbReference type="Proteomes" id="UP000001570">
    <property type="component" value="Chromosome"/>
</dbReference>
<dbReference type="InterPro" id="IPR038750">
    <property type="entry name" value="YczE/YyaS-like"/>
</dbReference>
<dbReference type="PANTHER" id="PTHR40078:SF1">
    <property type="entry name" value="INTEGRAL MEMBRANE PROTEIN"/>
    <property type="match status" value="1"/>
</dbReference>
<dbReference type="PANTHER" id="PTHR40078">
    <property type="entry name" value="INTEGRAL MEMBRANE PROTEIN-RELATED"/>
    <property type="match status" value="1"/>
</dbReference>
<feature type="chain" id="PRO_0000050059" description="Uncharacterized protein YyaS">
    <location>
        <begin position="1"/>
        <end position="201"/>
    </location>
</feature>
<gene>
    <name type="primary">yyaS</name>
    <name type="ordered locus">BSU40730</name>
</gene>
<proteinExistence type="predicted"/>